<gene>
    <name type="primary">eif3ha</name>
    <name type="synonym">eif3h</name>
    <name type="synonym">eif3s3a</name>
</gene>
<sequence length="335" mass="38597">MASRKESAASGSNPLDFPVKQIQVDGLVVLKIIKHYQEEGQGSEVVQGVLLGLVVEDRLEITNCFPFPQHTEDDVEFDEVQYQMEMMRSLRHVNIDHLHVGWYQSTYYGSFVSRALLDSQFSYQHAIEESVVLIYDPLKTAQGSLCLKAYRLTPKLMEICKEKDFTPEGLKKAAVAYEHMFEEVPIFIKNSHLINVLMWDLQEKSTLADKHELLNLSSSNHLEKSLQLLMDRVDDMSQDIVKYNTYCRNLSKQQQQKQQYQQRRQQENAQRQSRGEPPLPEEDISKMFKAPQAPPRMDTLLIAGQINNYCQNIKEFTSQNLGKLFMAEALQSNSS</sequence>
<reference key="1">
    <citation type="submission" date="2004-08" db="EMBL/GenBank/DDBJ databases">
        <authorList>
            <consortium name="NIH - Zebrafish Gene Collection (ZGC) project"/>
        </authorList>
    </citation>
    <scope>NUCLEOTIDE SEQUENCE [LARGE SCALE MRNA]</scope>
    <source>
        <strain>Singapore local strain</strain>
        <tissue>Embryo</tissue>
    </source>
</reference>
<accession>Q6AXJ2</accession>
<protein>
    <recommendedName>
        <fullName evidence="1">Eukaryotic translation initiation factor 3 subunit H-A</fullName>
        <shortName evidence="1">eIF3h-A</shortName>
    </recommendedName>
    <alternativeName>
        <fullName evidence="1">Eukaryotic translation initiation factor 3 subunit 3-A</fullName>
    </alternativeName>
    <alternativeName>
        <fullName>eIF-3-gamma-A</fullName>
    </alternativeName>
    <alternativeName>
        <fullName evidence="1">eIF3 p40 subunit A</fullName>
    </alternativeName>
</protein>
<evidence type="ECO:0000255" key="1">
    <source>
        <dbReference type="HAMAP-Rule" id="MF_03007"/>
    </source>
</evidence>
<evidence type="ECO:0000255" key="2">
    <source>
        <dbReference type="PROSITE-ProRule" id="PRU01182"/>
    </source>
</evidence>
<evidence type="ECO:0000256" key="3">
    <source>
        <dbReference type="SAM" id="MobiDB-lite"/>
    </source>
</evidence>
<name>EI3HA_DANRE</name>
<comment type="function">
    <text evidence="1">Component of the eukaryotic translation initiation factor 3 (eIF-3) complex, which is involved in protein synthesis of a specialized repertoire of mRNAs and, together with other initiation factors, stimulates binding of mRNA and methionyl-tRNAi to the 40S ribosome. The eIF-3 complex specifically targets and initiates translation of a subset of mRNAs involved in cell proliferation.</text>
</comment>
<comment type="subunit">
    <text evidence="1">Component of the eukaryotic translation initiation factor 3 (eIF-3) complex, which is composed of 13 subunits: eif3a, eif3b, eif3c, eif3d, eif3e, eif3f, eif3g, eif3h, eif3i, eif3j, eif3k, eif3l and eif3m.</text>
</comment>
<comment type="subcellular location">
    <subcellularLocation>
        <location evidence="1">Cytoplasm</location>
    </subcellularLocation>
</comment>
<comment type="similarity">
    <text evidence="1">Belongs to the eIF-3 subunit H family.</text>
</comment>
<keyword id="KW-0963">Cytoplasm</keyword>
<keyword id="KW-0396">Initiation factor</keyword>
<keyword id="KW-0648">Protein biosynthesis</keyword>
<keyword id="KW-1185">Reference proteome</keyword>
<feature type="chain" id="PRO_0000365176" description="Eukaryotic translation initiation factor 3 subunit H-A">
    <location>
        <begin position="1"/>
        <end position="335"/>
    </location>
</feature>
<feature type="domain" description="MPN" evidence="2">
    <location>
        <begin position="22"/>
        <end position="156"/>
    </location>
</feature>
<feature type="region of interest" description="Disordered" evidence="3">
    <location>
        <begin position="254"/>
        <end position="282"/>
    </location>
</feature>
<feature type="compositionally biased region" description="Low complexity" evidence="3">
    <location>
        <begin position="254"/>
        <end position="272"/>
    </location>
</feature>
<proteinExistence type="evidence at transcript level"/>
<dbReference type="EMBL" id="BC079514">
    <property type="protein sequence ID" value="AAH79514.1"/>
    <property type="molecule type" value="mRNA"/>
</dbReference>
<dbReference type="RefSeq" id="NP_001003763.1">
    <property type="nucleotide sequence ID" value="NM_001003763.2"/>
</dbReference>
<dbReference type="SMR" id="Q6AXJ2"/>
<dbReference type="FunCoup" id="Q6AXJ2">
    <property type="interactions" value="2765"/>
</dbReference>
<dbReference type="STRING" id="7955.ENSDARP00000129950"/>
<dbReference type="MEROPS" id="M67.971"/>
<dbReference type="PaxDb" id="7955-ENSDARP00000104169"/>
<dbReference type="Ensembl" id="ENSDART00000159372">
    <property type="protein sequence ID" value="ENSDARP00000129950"/>
    <property type="gene ID" value="ENSDARG00000102452"/>
</dbReference>
<dbReference type="GeneID" id="445306"/>
<dbReference type="KEGG" id="dre:445306"/>
<dbReference type="AGR" id="ZFIN:ZDB-GENE-040808-19"/>
<dbReference type="CTD" id="445306"/>
<dbReference type="ZFIN" id="ZDB-GENE-040808-19">
    <property type="gene designation" value="eif3ha"/>
</dbReference>
<dbReference type="eggNOG" id="KOG1560">
    <property type="taxonomic scope" value="Eukaryota"/>
</dbReference>
<dbReference type="HOGENOM" id="CLU_044094_0_0_1"/>
<dbReference type="InParanoid" id="Q6AXJ2"/>
<dbReference type="OMA" id="WYQSTYF"/>
<dbReference type="OrthoDB" id="10265695at2759"/>
<dbReference type="PhylomeDB" id="Q6AXJ2"/>
<dbReference type="TreeFam" id="TF101504"/>
<dbReference type="PRO" id="PR:Q6AXJ2"/>
<dbReference type="Proteomes" id="UP000000437">
    <property type="component" value="Chromosome 16"/>
</dbReference>
<dbReference type="Bgee" id="ENSDARG00000102452">
    <property type="expression patterns" value="Expressed in pharyngeal gill and 34 other cell types or tissues"/>
</dbReference>
<dbReference type="GO" id="GO:0016282">
    <property type="term" value="C:eukaryotic 43S preinitiation complex"/>
    <property type="evidence" value="ECO:0000318"/>
    <property type="project" value="GO_Central"/>
</dbReference>
<dbReference type="GO" id="GO:0033290">
    <property type="term" value="C:eukaryotic 48S preinitiation complex"/>
    <property type="evidence" value="ECO:0007669"/>
    <property type="project" value="UniProtKB-UniRule"/>
</dbReference>
<dbReference type="GO" id="GO:0005852">
    <property type="term" value="C:eukaryotic translation initiation factor 3 complex"/>
    <property type="evidence" value="ECO:0000250"/>
    <property type="project" value="UniProtKB"/>
</dbReference>
<dbReference type="GO" id="GO:0008237">
    <property type="term" value="F:metallopeptidase activity"/>
    <property type="evidence" value="ECO:0000318"/>
    <property type="project" value="GO_Central"/>
</dbReference>
<dbReference type="GO" id="GO:0003743">
    <property type="term" value="F:translation initiation factor activity"/>
    <property type="evidence" value="ECO:0007669"/>
    <property type="project" value="UniProtKB-UniRule"/>
</dbReference>
<dbReference type="GO" id="GO:0007420">
    <property type="term" value="P:brain development"/>
    <property type="evidence" value="ECO:0000315"/>
    <property type="project" value="ZFIN"/>
</dbReference>
<dbReference type="GO" id="GO:0001732">
    <property type="term" value="P:formation of cytoplasmic translation initiation complex"/>
    <property type="evidence" value="ECO:0007669"/>
    <property type="project" value="UniProtKB-UniRule"/>
</dbReference>
<dbReference type="GO" id="GO:0048882">
    <property type="term" value="P:lateral line development"/>
    <property type="evidence" value="ECO:0000315"/>
    <property type="project" value="ZFIN"/>
</dbReference>
<dbReference type="GO" id="GO:0006417">
    <property type="term" value="P:regulation of translation"/>
    <property type="evidence" value="ECO:0000315"/>
    <property type="project" value="ZFIN"/>
</dbReference>
<dbReference type="GO" id="GO:0006413">
    <property type="term" value="P:translational initiation"/>
    <property type="evidence" value="ECO:0000250"/>
    <property type="project" value="UniProtKB"/>
</dbReference>
<dbReference type="GO" id="GO:0001944">
    <property type="term" value="P:vasculature development"/>
    <property type="evidence" value="ECO:0000315"/>
    <property type="project" value="ZFIN"/>
</dbReference>
<dbReference type="CDD" id="cd08065">
    <property type="entry name" value="MPN_eIF3h"/>
    <property type="match status" value="1"/>
</dbReference>
<dbReference type="FunFam" id="3.40.140.10:FF:000020">
    <property type="entry name" value="Eukaryotic translation initiation factor 3 subunit H"/>
    <property type="match status" value="1"/>
</dbReference>
<dbReference type="Gene3D" id="3.40.140.10">
    <property type="entry name" value="Cytidine Deaminase, domain 2"/>
    <property type="match status" value="1"/>
</dbReference>
<dbReference type="HAMAP" id="MF_03007">
    <property type="entry name" value="eIF3h"/>
    <property type="match status" value="1"/>
</dbReference>
<dbReference type="InterPro" id="IPR027524">
    <property type="entry name" value="eIF3h"/>
</dbReference>
<dbReference type="InterPro" id="IPR045810">
    <property type="entry name" value="eIF3h_C"/>
</dbReference>
<dbReference type="InterPro" id="IPR000555">
    <property type="entry name" value="JAMM/MPN+_dom"/>
</dbReference>
<dbReference type="InterPro" id="IPR050242">
    <property type="entry name" value="JAMM_MPN+_peptidase_M67A"/>
</dbReference>
<dbReference type="InterPro" id="IPR037518">
    <property type="entry name" value="MPN"/>
</dbReference>
<dbReference type="PANTHER" id="PTHR10410">
    <property type="entry name" value="EUKARYOTIC TRANSLATION INITIATION FACTOR 3 -RELATED"/>
    <property type="match status" value="1"/>
</dbReference>
<dbReference type="Pfam" id="PF19445">
    <property type="entry name" value="eIF3h_C"/>
    <property type="match status" value="1"/>
</dbReference>
<dbReference type="Pfam" id="PF01398">
    <property type="entry name" value="JAB"/>
    <property type="match status" value="1"/>
</dbReference>
<dbReference type="SMART" id="SM00232">
    <property type="entry name" value="JAB_MPN"/>
    <property type="match status" value="1"/>
</dbReference>
<dbReference type="PROSITE" id="PS50249">
    <property type="entry name" value="MPN"/>
    <property type="match status" value="1"/>
</dbReference>
<organism>
    <name type="scientific">Danio rerio</name>
    <name type="common">Zebrafish</name>
    <name type="synonym">Brachydanio rerio</name>
    <dbReference type="NCBI Taxonomy" id="7955"/>
    <lineage>
        <taxon>Eukaryota</taxon>
        <taxon>Metazoa</taxon>
        <taxon>Chordata</taxon>
        <taxon>Craniata</taxon>
        <taxon>Vertebrata</taxon>
        <taxon>Euteleostomi</taxon>
        <taxon>Actinopterygii</taxon>
        <taxon>Neopterygii</taxon>
        <taxon>Teleostei</taxon>
        <taxon>Ostariophysi</taxon>
        <taxon>Cypriniformes</taxon>
        <taxon>Danionidae</taxon>
        <taxon>Danioninae</taxon>
        <taxon>Danio</taxon>
    </lineage>
</organism>